<keyword id="KW-0007">Acetylation</keyword>
<keyword id="KW-0106">Calcium</keyword>
<keyword id="KW-0903">Direct protein sequencing</keyword>
<keyword id="KW-0479">Metal-binding</keyword>
<keyword id="KW-0514">Muscle protein</keyword>
<keyword id="KW-0677">Repeat</keyword>
<proteinExistence type="evidence at protein level"/>
<reference key="1">
    <citation type="journal article" date="1984" name="J. Biochem.">
        <title>Amino acid sequence of alpha chain of sarcoplasmic calcium binding protein obtained from shrimp tail muscle.</title>
        <authorList>
            <person name="Takagi T."/>
            <person name="Konishi K."/>
        </authorList>
    </citation>
    <scope>PROTEIN SEQUENCE</scope>
    <scope>ACETYLATION AT ALA-1</scope>
</reference>
<evidence type="ECO:0000255" key="1">
    <source>
        <dbReference type="PROSITE-ProRule" id="PRU00448"/>
    </source>
</evidence>
<evidence type="ECO:0000269" key="2">
    <source>
    </source>
</evidence>
<name>SCPA_PENSP</name>
<organism>
    <name type="scientific">Penaeus sp.</name>
    <name type="common">Penoeid shrimp</name>
    <dbReference type="NCBI Taxonomy" id="6688"/>
    <lineage>
        <taxon>Eukaryota</taxon>
        <taxon>Metazoa</taxon>
        <taxon>Ecdysozoa</taxon>
        <taxon>Arthropoda</taxon>
        <taxon>Crustacea</taxon>
        <taxon>Multicrustacea</taxon>
        <taxon>Malacostraca</taxon>
        <taxon>Eumalacostraca</taxon>
        <taxon>Eucarida</taxon>
        <taxon>Decapoda</taxon>
        <taxon>Dendrobranchiata</taxon>
        <taxon>Penaeoidea</taxon>
        <taxon>Penaeidae</taxon>
    </lineage>
</organism>
<feature type="chain" id="PRO_0000073634" description="Sarcoplasmic calcium-binding protein, alpha-B and -A chains">
    <location>
        <begin position="1"/>
        <end position="192"/>
    </location>
</feature>
<feature type="domain" description="EF-hand 1" evidence="1">
    <location>
        <begin position="4"/>
        <end position="39"/>
    </location>
</feature>
<feature type="domain" description="EF-hand 2" evidence="1">
    <location>
        <begin position="56"/>
        <end position="91"/>
    </location>
</feature>
<feature type="domain" description="EF-hand 3" evidence="1">
    <location>
        <begin position="100"/>
        <end position="135"/>
    </location>
</feature>
<feature type="domain" description="EF-hand 4" evidence="1">
    <location>
        <begin position="136"/>
        <end position="171"/>
    </location>
</feature>
<feature type="binding site" evidence="1">
    <location>
        <position position="17"/>
    </location>
    <ligand>
        <name>Ca(2+)</name>
        <dbReference type="ChEBI" id="CHEBI:29108"/>
        <label>1</label>
    </ligand>
</feature>
<feature type="binding site" evidence="1">
    <location>
        <position position="19"/>
    </location>
    <ligand>
        <name>Ca(2+)</name>
        <dbReference type="ChEBI" id="CHEBI:29108"/>
        <label>1</label>
    </ligand>
</feature>
<feature type="binding site" evidence="1">
    <location>
        <position position="21"/>
    </location>
    <ligand>
        <name>Ca(2+)</name>
        <dbReference type="ChEBI" id="CHEBI:29108"/>
        <label>1</label>
    </ligand>
</feature>
<feature type="binding site" evidence="1">
    <location>
        <position position="28"/>
    </location>
    <ligand>
        <name>Ca(2+)</name>
        <dbReference type="ChEBI" id="CHEBI:29108"/>
        <label>1</label>
    </ligand>
</feature>
<feature type="binding site" evidence="1">
    <location>
        <position position="69"/>
    </location>
    <ligand>
        <name>Ca(2+)</name>
        <dbReference type="ChEBI" id="CHEBI:29108"/>
        <label>2</label>
    </ligand>
</feature>
<feature type="binding site" evidence="1">
    <location>
        <position position="71"/>
    </location>
    <ligand>
        <name>Ca(2+)</name>
        <dbReference type="ChEBI" id="CHEBI:29108"/>
        <label>2</label>
    </ligand>
</feature>
<feature type="binding site" evidence="1">
    <location>
        <position position="73"/>
    </location>
    <ligand>
        <name>Ca(2+)</name>
        <dbReference type="ChEBI" id="CHEBI:29108"/>
        <label>2</label>
    </ligand>
</feature>
<feature type="binding site" evidence="1">
    <location>
        <position position="75"/>
    </location>
    <ligand>
        <name>Ca(2+)</name>
        <dbReference type="ChEBI" id="CHEBI:29108"/>
        <label>2</label>
    </ligand>
</feature>
<feature type="binding site" evidence="1">
    <location>
        <position position="80"/>
    </location>
    <ligand>
        <name>Ca(2+)</name>
        <dbReference type="ChEBI" id="CHEBI:29108"/>
        <label>2</label>
    </ligand>
</feature>
<feature type="binding site" evidence="1">
    <location>
        <position position="113"/>
    </location>
    <ligand>
        <name>Ca(2+)</name>
        <dbReference type="ChEBI" id="CHEBI:29108"/>
        <label>3</label>
    </ligand>
</feature>
<feature type="binding site" evidence="1">
    <location>
        <position position="115"/>
    </location>
    <ligand>
        <name>Ca(2+)</name>
        <dbReference type="ChEBI" id="CHEBI:29108"/>
        <label>3</label>
    </ligand>
</feature>
<feature type="binding site" evidence="1">
    <location>
        <position position="117"/>
    </location>
    <ligand>
        <name>Ca(2+)</name>
        <dbReference type="ChEBI" id="CHEBI:29108"/>
        <label>3</label>
    </ligand>
</feature>
<feature type="binding site" evidence="1">
    <location>
        <position position="119"/>
    </location>
    <ligand>
        <name>Ca(2+)</name>
        <dbReference type="ChEBI" id="CHEBI:29108"/>
        <label>3</label>
    </ligand>
</feature>
<feature type="binding site" evidence="1">
    <location>
        <position position="124"/>
    </location>
    <ligand>
        <name>Ca(2+)</name>
        <dbReference type="ChEBI" id="CHEBI:29108"/>
        <label>3</label>
    </ligand>
</feature>
<feature type="modified residue" description="N-acetylalanine" evidence="2">
    <location>
        <position position="1"/>
    </location>
</feature>
<feature type="sequence variant" description="In alpha-A.">
    <location>
        <position position="4"/>
    </location>
</feature>
<feature type="sequence variant" description="In alpha-A.">
    <location>
        <position position="61"/>
    </location>
</feature>
<feature type="sequence variant" description="In alpha-A.">
    <original>S</original>
    <variation>G</variation>
    <location>
        <position position="95"/>
    </location>
</feature>
<feature type="sequence variant" description="In alpha A.">
    <original>N</original>
    <variation>D</variation>
    <location>
        <position position="107"/>
    </location>
</feature>
<comment type="function">
    <text>Like parvalbumins, SCPs seem to be more abundant in fast contracting muscles, but no functional relationship can be established from this distribution.</text>
</comment>
<comment type="subunit">
    <text>SCPs from crayfish, lobster, and shrimp are polymorphic dimers; three isotypes (alpha-alpha, alpha-beta, and beta-beta) have been identified.</text>
</comment>
<comment type="miscellaneous">
    <text>The sarcoplasmic calcium-binding proteins are abundant in the muscle of arthropods, mollusks, annelids, and protochordates.</text>
</comment>
<comment type="miscellaneous">
    <text>This protein has three functional calcium-binding sites; potential site 4 has lost affinity for calcium.</text>
</comment>
<dbReference type="PIR" id="A03073">
    <property type="entry name" value="KLSSAB"/>
</dbReference>
<dbReference type="PIR" id="A03074">
    <property type="entry name" value="KLSSAA"/>
</dbReference>
<dbReference type="SMR" id="P02636"/>
<dbReference type="iPTMnet" id="P02636"/>
<dbReference type="GO" id="GO:0005509">
    <property type="term" value="F:calcium ion binding"/>
    <property type="evidence" value="ECO:0007669"/>
    <property type="project" value="InterPro"/>
</dbReference>
<dbReference type="Gene3D" id="1.10.238.10">
    <property type="entry name" value="EF-hand"/>
    <property type="match status" value="1"/>
</dbReference>
<dbReference type="InterPro" id="IPR011992">
    <property type="entry name" value="EF-hand-dom_pair"/>
</dbReference>
<dbReference type="InterPro" id="IPR018247">
    <property type="entry name" value="EF_Hand_1_Ca_BS"/>
</dbReference>
<dbReference type="InterPro" id="IPR002048">
    <property type="entry name" value="EF_hand_dom"/>
</dbReference>
<dbReference type="Pfam" id="PF13202">
    <property type="entry name" value="EF-hand_5"/>
    <property type="match status" value="2"/>
</dbReference>
<dbReference type="SMART" id="SM00054">
    <property type="entry name" value="EFh"/>
    <property type="match status" value="2"/>
</dbReference>
<dbReference type="SUPFAM" id="SSF47473">
    <property type="entry name" value="EF-hand"/>
    <property type="match status" value="1"/>
</dbReference>
<dbReference type="PROSITE" id="PS00018">
    <property type="entry name" value="EF_HAND_1"/>
    <property type="match status" value="3"/>
</dbReference>
<dbReference type="PROSITE" id="PS50222">
    <property type="entry name" value="EF_HAND_2"/>
    <property type="match status" value="3"/>
</dbReference>
<sequence>AYSWDNRVKYVVRYMYDIDDDGFLDKNDFECLAVRNTLIEGRGEFSAADYANNQKIMRNLWNEIAELADFNKDGEVTVDEFKMAVQKHCQGKKYSEFPGAFKVFIANQFKAIDVNGDGKVGLDEYRLDCITRSAFAEVKEIDDAYDKLTTEDDRKAGGLTLERYQDLYAQFISNPNESCSACFLFGPLKVVQ</sequence>
<protein>
    <recommendedName>
        <fullName>Sarcoplasmic calcium-binding protein, alpha-B and -A chains</fullName>
        <shortName>SCP alpha chain</shortName>
    </recommendedName>
</protein>
<accession>P02636</accession>